<evidence type="ECO:0000250" key="1"/>
<sequence>MPQGTVKWFNAEKGFGFIAPEDGSADVFVHYTEIQGTGFRTLEENQKVEFEIGHSPKGPQATGVRSL</sequence>
<gene>
    <name type="primary">cspA</name>
    <name type="ordered locus">Rv3648c</name>
    <name type="ORF">MTCY15C10.04</name>
</gene>
<organism>
    <name type="scientific">Mycobacterium tuberculosis (strain ATCC 25618 / H37Rv)</name>
    <dbReference type="NCBI Taxonomy" id="83332"/>
    <lineage>
        <taxon>Bacteria</taxon>
        <taxon>Bacillati</taxon>
        <taxon>Actinomycetota</taxon>
        <taxon>Actinomycetes</taxon>
        <taxon>Mycobacteriales</taxon>
        <taxon>Mycobacteriaceae</taxon>
        <taxon>Mycobacterium</taxon>
        <taxon>Mycobacterium tuberculosis complex</taxon>
    </lineage>
</organism>
<name>CSPA_MYCTU</name>
<dbReference type="EMBL" id="AL123456">
    <property type="protein sequence ID" value="CCP46471.1"/>
    <property type="molecule type" value="Genomic_DNA"/>
</dbReference>
<dbReference type="PIR" id="A70564">
    <property type="entry name" value="A70564"/>
</dbReference>
<dbReference type="RefSeq" id="NP_218165.1">
    <property type="nucleotide sequence ID" value="NC_000962.3"/>
</dbReference>
<dbReference type="RefSeq" id="WP_003419650.1">
    <property type="nucleotide sequence ID" value="NZ_NVQJ01000045.1"/>
</dbReference>
<dbReference type="SMR" id="P9WP75"/>
<dbReference type="FunCoup" id="P9WP75">
    <property type="interactions" value="9"/>
</dbReference>
<dbReference type="STRING" id="83332.Rv3648c"/>
<dbReference type="PaxDb" id="83332-Rv3648c"/>
<dbReference type="DNASU" id="885837"/>
<dbReference type="GeneID" id="83630464"/>
<dbReference type="GeneID" id="885837"/>
<dbReference type="KEGG" id="mtu:Rv3648c"/>
<dbReference type="KEGG" id="mtv:RVBD_3648c"/>
<dbReference type="TubercuList" id="Rv3648c"/>
<dbReference type="eggNOG" id="COG1278">
    <property type="taxonomic scope" value="Bacteria"/>
</dbReference>
<dbReference type="InParanoid" id="P9WP75"/>
<dbReference type="OrthoDB" id="7477356at2"/>
<dbReference type="PhylomeDB" id="P9WP75"/>
<dbReference type="PRO" id="PR:P9WP75"/>
<dbReference type="Proteomes" id="UP000001584">
    <property type="component" value="Chromosome"/>
</dbReference>
<dbReference type="GO" id="GO:0005737">
    <property type="term" value="C:cytoplasm"/>
    <property type="evidence" value="ECO:0007669"/>
    <property type="project" value="UniProtKB-SubCell"/>
</dbReference>
<dbReference type="GO" id="GO:0009274">
    <property type="term" value="C:peptidoglycan-based cell wall"/>
    <property type="evidence" value="ECO:0007005"/>
    <property type="project" value="MTBBASE"/>
</dbReference>
<dbReference type="GO" id="GO:0003677">
    <property type="term" value="F:DNA binding"/>
    <property type="evidence" value="ECO:0007669"/>
    <property type="project" value="UniProtKB-KW"/>
</dbReference>
<dbReference type="GO" id="GO:0003676">
    <property type="term" value="F:nucleic acid binding"/>
    <property type="evidence" value="ECO:0000318"/>
    <property type="project" value="GO_Central"/>
</dbReference>
<dbReference type="GO" id="GO:0010468">
    <property type="term" value="P:regulation of gene expression"/>
    <property type="evidence" value="ECO:0000318"/>
    <property type="project" value="GO_Central"/>
</dbReference>
<dbReference type="CDD" id="cd04458">
    <property type="entry name" value="CSP_CDS"/>
    <property type="match status" value="1"/>
</dbReference>
<dbReference type="FunFam" id="2.40.50.140:FF:000006">
    <property type="entry name" value="Cold shock protein CspC"/>
    <property type="match status" value="1"/>
</dbReference>
<dbReference type="Gene3D" id="2.40.50.140">
    <property type="entry name" value="Nucleic acid-binding proteins"/>
    <property type="match status" value="1"/>
</dbReference>
<dbReference type="InterPro" id="IPR012156">
    <property type="entry name" value="Cold_shock_CspA"/>
</dbReference>
<dbReference type="InterPro" id="IPR050181">
    <property type="entry name" value="Cold_shock_domain"/>
</dbReference>
<dbReference type="InterPro" id="IPR011129">
    <property type="entry name" value="CSD"/>
</dbReference>
<dbReference type="InterPro" id="IPR019844">
    <property type="entry name" value="CSD_CS"/>
</dbReference>
<dbReference type="InterPro" id="IPR002059">
    <property type="entry name" value="CSP_DNA-bd"/>
</dbReference>
<dbReference type="InterPro" id="IPR012340">
    <property type="entry name" value="NA-bd_OB-fold"/>
</dbReference>
<dbReference type="PANTHER" id="PTHR11544">
    <property type="entry name" value="COLD SHOCK DOMAIN CONTAINING PROTEINS"/>
    <property type="match status" value="1"/>
</dbReference>
<dbReference type="Pfam" id="PF00313">
    <property type="entry name" value="CSD"/>
    <property type="match status" value="1"/>
</dbReference>
<dbReference type="PIRSF" id="PIRSF002599">
    <property type="entry name" value="Cold_shock_A"/>
    <property type="match status" value="1"/>
</dbReference>
<dbReference type="PRINTS" id="PR00050">
    <property type="entry name" value="COLDSHOCK"/>
</dbReference>
<dbReference type="SMART" id="SM00357">
    <property type="entry name" value="CSP"/>
    <property type="match status" value="1"/>
</dbReference>
<dbReference type="SUPFAM" id="SSF50249">
    <property type="entry name" value="Nucleic acid-binding proteins"/>
    <property type="match status" value="1"/>
</dbReference>
<dbReference type="PROSITE" id="PS00352">
    <property type="entry name" value="CSD_1"/>
    <property type="match status" value="1"/>
</dbReference>
<dbReference type="PROSITE" id="PS51857">
    <property type="entry name" value="CSD_2"/>
    <property type="match status" value="1"/>
</dbReference>
<reference key="1">
    <citation type="journal article" date="1998" name="Nature">
        <title>Deciphering the biology of Mycobacterium tuberculosis from the complete genome sequence.</title>
        <authorList>
            <person name="Cole S.T."/>
            <person name="Brosch R."/>
            <person name="Parkhill J."/>
            <person name="Garnier T."/>
            <person name="Churcher C.M."/>
            <person name="Harris D.E."/>
            <person name="Gordon S.V."/>
            <person name="Eiglmeier K."/>
            <person name="Gas S."/>
            <person name="Barry C.E. III"/>
            <person name="Tekaia F."/>
            <person name="Badcock K."/>
            <person name="Basham D."/>
            <person name="Brown D."/>
            <person name="Chillingworth T."/>
            <person name="Connor R."/>
            <person name="Davies R.M."/>
            <person name="Devlin K."/>
            <person name="Feltwell T."/>
            <person name="Gentles S."/>
            <person name="Hamlin N."/>
            <person name="Holroyd S."/>
            <person name="Hornsby T."/>
            <person name="Jagels K."/>
            <person name="Krogh A."/>
            <person name="McLean J."/>
            <person name="Moule S."/>
            <person name="Murphy L.D."/>
            <person name="Oliver S."/>
            <person name="Osborne J."/>
            <person name="Quail M.A."/>
            <person name="Rajandream M.A."/>
            <person name="Rogers J."/>
            <person name="Rutter S."/>
            <person name="Seeger K."/>
            <person name="Skelton S."/>
            <person name="Squares S."/>
            <person name="Squares R."/>
            <person name="Sulston J.E."/>
            <person name="Taylor K."/>
            <person name="Whitehead S."/>
            <person name="Barrell B.G."/>
        </authorList>
    </citation>
    <scope>NUCLEOTIDE SEQUENCE [LARGE SCALE GENOMIC DNA]</scope>
    <source>
        <strain>ATCC 25618 / H37Rv</strain>
    </source>
</reference>
<reference key="2">
    <citation type="journal article" date="2011" name="Mol. Cell. Proteomics">
        <title>Proteogenomic analysis of Mycobacterium tuberculosis by high resolution mass spectrometry.</title>
        <authorList>
            <person name="Kelkar D.S."/>
            <person name="Kumar D."/>
            <person name="Kumar P."/>
            <person name="Balakrishnan L."/>
            <person name="Muthusamy B."/>
            <person name="Yadav A.K."/>
            <person name="Shrivastava P."/>
            <person name="Marimuthu A."/>
            <person name="Anand S."/>
            <person name="Sundaram H."/>
            <person name="Kingsbury R."/>
            <person name="Harsha H.C."/>
            <person name="Nair B."/>
            <person name="Prasad T.S."/>
            <person name="Chauhan D.S."/>
            <person name="Katoch K."/>
            <person name="Katoch V.M."/>
            <person name="Kumar P."/>
            <person name="Chaerkady R."/>
            <person name="Ramachandran S."/>
            <person name="Dash D."/>
            <person name="Pandey A."/>
        </authorList>
    </citation>
    <scope>IDENTIFICATION BY MASS SPECTROMETRY [LARGE SCALE ANALYSIS]</scope>
    <source>
        <strain>ATCC 25618 / H37Rv</strain>
    </source>
</reference>
<protein>
    <recommendedName>
        <fullName>Probable cold shock protein A</fullName>
    </recommendedName>
</protein>
<comment type="subcellular location">
    <subcellularLocation>
        <location evidence="1">Cytoplasm</location>
    </subcellularLocation>
</comment>
<accession>P9WP75</accession>
<accession>L0TG33</accession>
<accession>O06360</accession>
<accession>P63848</accession>
<keyword id="KW-0010">Activator</keyword>
<keyword id="KW-0963">Cytoplasm</keyword>
<keyword id="KW-0238">DNA-binding</keyword>
<keyword id="KW-1185">Reference proteome</keyword>
<keyword id="KW-0804">Transcription</keyword>
<keyword id="KW-0805">Transcription regulation</keyword>
<proteinExistence type="evidence at protein level"/>
<feature type="chain" id="PRO_0000100312" description="Probable cold shock protein A">
    <location>
        <begin position="1"/>
        <end position="67"/>
    </location>
</feature>
<feature type="domain" description="CSD">
    <location>
        <begin position="4"/>
        <end position="64"/>
    </location>
</feature>